<dbReference type="EC" id="1.11.1.-" evidence="2"/>
<dbReference type="EMBL" id="CP026734">
    <property type="protein sequence ID" value="AZU02205.1"/>
    <property type="molecule type" value="Genomic_DNA"/>
</dbReference>
<dbReference type="RefSeq" id="WP_127363516.1">
    <property type="nucleotide sequence ID" value="NZ_CP026734.1"/>
</dbReference>
<dbReference type="EMDB" id="EMD-12146"/>
<dbReference type="SMR" id="A0A3T0E4B9"/>
<dbReference type="GO" id="GO:0005829">
    <property type="term" value="C:cytosol"/>
    <property type="evidence" value="ECO:0007669"/>
    <property type="project" value="TreeGrafter"/>
</dbReference>
<dbReference type="GO" id="GO:0140737">
    <property type="term" value="C:encapsulin nanocompartment"/>
    <property type="evidence" value="ECO:0000314"/>
    <property type="project" value="UniProtKB"/>
</dbReference>
<dbReference type="GO" id="GO:0020037">
    <property type="term" value="F:heme binding"/>
    <property type="evidence" value="ECO:0007669"/>
    <property type="project" value="InterPro"/>
</dbReference>
<dbReference type="GO" id="GO:0046872">
    <property type="term" value="F:metal ion binding"/>
    <property type="evidence" value="ECO:0007669"/>
    <property type="project" value="UniProtKB-KW"/>
</dbReference>
<dbReference type="GO" id="GO:0004601">
    <property type="term" value="F:peroxidase activity"/>
    <property type="evidence" value="ECO:0007669"/>
    <property type="project" value="UniProtKB-KW"/>
</dbReference>
<dbReference type="InterPro" id="IPR011008">
    <property type="entry name" value="Dimeric_a/b-barrel"/>
</dbReference>
<dbReference type="InterPro" id="IPR048328">
    <property type="entry name" value="Dyp_perox_C"/>
</dbReference>
<dbReference type="InterPro" id="IPR048327">
    <property type="entry name" value="Dyp_perox_N"/>
</dbReference>
<dbReference type="InterPro" id="IPR006314">
    <property type="entry name" value="Dyp_peroxidase"/>
</dbReference>
<dbReference type="NCBIfam" id="TIGR01413">
    <property type="entry name" value="Dyp_perox_fam"/>
    <property type="match status" value="1"/>
</dbReference>
<dbReference type="PANTHER" id="PTHR30521">
    <property type="entry name" value="DEFERROCHELATASE/PEROXIDASE"/>
    <property type="match status" value="1"/>
</dbReference>
<dbReference type="PANTHER" id="PTHR30521:SF0">
    <property type="entry name" value="DYP-TYPE PEROXIDASE FAMILY PROTEIN"/>
    <property type="match status" value="1"/>
</dbReference>
<dbReference type="Pfam" id="PF20628">
    <property type="entry name" value="Dyp_perox_C"/>
    <property type="match status" value="1"/>
</dbReference>
<dbReference type="Pfam" id="PF04261">
    <property type="entry name" value="Dyp_perox_N"/>
    <property type="match status" value="1"/>
</dbReference>
<dbReference type="SUPFAM" id="SSF54909">
    <property type="entry name" value="Dimeric alpha+beta barrel"/>
    <property type="match status" value="1"/>
</dbReference>
<dbReference type="PROSITE" id="PS51404">
    <property type="entry name" value="DYP_PEROXIDASE"/>
    <property type="match status" value="1"/>
</dbReference>
<evidence type="ECO:0000250" key="1">
    <source>
        <dbReference type="UniProtKB" id="I6WZG6"/>
    </source>
</evidence>
<evidence type="ECO:0000250" key="2">
    <source>
        <dbReference type="UniProtKB" id="P76536"/>
    </source>
</evidence>
<evidence type="ECO:0000250" key="3">
    <source>
        <dbReference type="UniProtKB" id="Q47KB1"/>
    </source>
</evidence>
<evidence type="ECO:0000256" key="4">
    <source>
        <dbReference type="SAM" id="MobiDB-lite"/>
    </source>
</evidence>
<evidence type="ECO:0000269" key="5">
    <source>
    </source>
</evidence>
<evidence type="ECO:0000269" key="6">
    <source>
    </source>
</evidence>
<evidence type="ECO:0000269" key="7">
    <source>
    </source>
</evidence>
<evidence type="ECO:0000303" key="8">
    <source>
    </source>
</evidence>
<evidence type="ECO:0000305" key="9"/>
<evidence type="ECO:0000305" key="10">
    <source>
    </source>
</evidence>
<name>DYP_BRELN</name>
<protein>
    <recommendedName>
        <fullName evidence="8">Dye-decolorizing peroxidase</fullName>
        <shortName evidence="8">DyP</shortName>
        <ecNumber evidence="2">1.11.1.-</ecNumber>
    </recommendedName>
</protein>
<reference key="1">
    <citation type="journal article" date="2019" name="Front. Microbiol.">
        <title>Mobilome of Brevibacterium aurantiacum Sheds Light on Its Genetic Diversity and Its Adaptation to Smear-Ripened Cheeses.</title>
        <authorList>
            <person name="Levesque S."/>
            <person name="de Melo A.G."/>
            <person name="Labrie S.J."/>
            <person name="Moineau S."/>
        </authorList>
    </citation>
    <scope>NUCLEOTIDE SEQUENCE [LARGE SCALE GENOMIC DNA]</scope>
    <source>
        <strain>ATCC 19391</strain>
    </source>
</reference>
<reference key="2">
    <citation type="journal article" date="2008" name="Nat. Struct. Mol. Biol.">
        <title>Structural basis of enzyme encapsulation into a bacterial nanocompartment.</title>
        <authorList>
            <person name="Sutter M."/>
            <person name="Boehringer D."/>
            <person name="Gutmann S."/>
            <person name="Gunther S."/>
            <person name="Prangishvili D."/>
            <person name="Loessner M.J."/>
            <person name="Stetter K.O."/>
            <person name="Weber-Ban E."/>
            <person name="Ban N."/>
        </authorList>
    </citation>
    <scope>PROBABLE SUBUNIT</scope>
    <scope>SUBCELLULAR LOCATION</scope>
    <scope>DOMAIN</scope>
    <source>
        <strain>M18</strain>
    </source>
</reference>
<reference key="3">
    <citation type="journal article" date="2016" name="Biomacromolecules">
        <title>Assembly and Mechanical Properties of the Cargo-Free and Cargo-Loaded Bacterial Nanocompartment Encapsulin.</title>
        <authorList>
            <person name="Snijder J."/>
            <person name="Kononova O."/>
            <person name="Barbu I.M."/>
            <person name="Uetrecht C."/>
            <person name="Rurup W.F."/>
            <person name="Burnley R.J."/>
            <person name="Koay M.S."/>
            <person name="Cornelissen J.J."/>
            <person name="Roos W.H."/>
            <person name="Barsegov V."/>
            <person name="Wuite G.J."/>
            <person name="Heck A.J."/>
        </authorList>
    </citation>
    <scope>SUBUNIT</scope>
    <scope>SUBCELLULAR LOCATION</scope>
    <scope>MASS SPECTROMETRY</scope>
</reference>
<reference key="4">
    <citation type="journal article" date="2017" name="ACS Nano">
        <title>Structural Characterization of Native and Modified Encapsulins as Nanoplatforms for in Vitro Catalysis and Cellular Uptake.</title>
        <authorList>
            <person name="Putri R.M."/>
            <person name="Allende-Ballestero C."/>
            <person name="Luque D."/>
            <person name="Klem R."/>
            <person name="Rousou K.A."/>
            <person name="Liu A."/>
            <person name="Traulsen C.H."/>
            <person name="Rurup W.F."/>
            <person name="Koay M.S.T."/>
            <person name="Caston J.R."/>
            <person name="Cornelissen J.J.L.M."/>
        </authorList>
    </citation>
    <scope>STRUCTURE BY ELECTRON MICROSCOPY (15.1 ANGSTROMS)</scope>
    <scope>SUBCELLULAR LOCATION</scope>
    <scope>BIOTECHNOLOGY</scope>
</reference>
<sequence length="367" mass="39926">MTEAFPNGKTPQHVLGPPAPAAVFLVLTVRSGAEAEAKDFLGDIAGVVRSVGFRAREDHLSCVTGIGAELWDRMFDAPRPAGLHPFIEQRGDVHTAPSTPGDLLFHIRARRMDLCFELARQLVGELGDAVSVVDEVHGFRYFDERDIMGFVDGTENPEDQEAVDSVFTPTGGDDPASSTYVIVQKYTHDMAAWEALSVEDQEAAFGRHKLSDMEFPDEDKAPNSHLILNTIEDEDGTEHKIVRDNMVFGSVESGEFGTYFIGYAADVSVTEQMLENMFIGNPRGTYDRILDFSTAQTGGLFFVPSQDFLDDPDGELAAAEPSDAQNDDPASASARIEETDPPNPASADDPAPADDSLGIGSLRRRDQ</sequence>
<accession>A0A3T0E4B9</accession>
<gene>
    <name type="ORF">CXR29_00095</name>
</gene>
<proteinExistence type="evidence at protein level"/>
<comment type="function">
    <text evidence="1 2">Cargo protein of a type 1 encapsulin nanocompartment. Has both general peroxidase activity and dye-decolorizing activity. Can catalyze the oxidation of both protoporphyrinogen IX and coproporphyrinogen III to their corresponding porphyrins. Also efficiently decolorizes the dyes alizarin red and Cibacron blue F3GA (By similarity). This cargo-loaded encapsulin nanocompartment is probably involved in protection against oxidative damage (By similarity).</text>
</comment>
<comment type="cofactor">
    <cofactor evidence="2">
        <name>heme b</name>
        <dbReference type="ChEBI" id="CHEBI:60344"/>
    </cofactor>
</comment>
<comment type="subunit">
    <text evidence="6 10">Homohexamer.</text>
</comment>
<comment type="subcellular location">
    <subcellularLocation>
        <location evidence="5 6 7">Encapsulin nanocompartment</location>
    </subcellularLocation>
</comment>
<comment type="domain">
    <text evidence="10">The C-terminus (at least 10 residues, not detailed in paper) targets the protein to the nanocompartment.</text>
</comment>
<comment type="mass spectrometry" mass="39.6" error="0.002" method="Electrospray" evidence="6">
    <text>Monomer without heme cofactor.</text>
</comment>
<comment type="mass spectrometry" mass="241.3" error="0.03" method="Electrospray" evidence="6">
    <text>Homohexamer with heme cofactor.</text>
</comment>
<comment type="biotechnology">
    <text evidence="7">Can be used as a bionanoreactor following immobilization on a glass surface.</text>
</comment>
<comment type="similarity">
    <text evidence="9">Belongs to the DyP-type peroxidase family.</text>
</comment>
<organism>
    <name type="scientific">Brevibacterium linens</name>
    <dbReference type="NCBI Taxonomy" id="1703"/>
    <lineage>
        <taxon>Bacteria</taxon>
        <taxon>Bacillati</taxon>
        <taxon>Actinomycetota</taxon>
        <taxon>Actinomycetes</taxon>
        <taxon>Micrococcales</taxon>
        <taxon>Brevibacteriaceae</taxon>
        <taxon>Brevibacterium</taxon>
    </lineage>
</organism>
<keyword id="KW-1284">Encapsulin nanocompartment</keyword>
<keyword id="KW-0349">Heme</keyword>
<keyword id="KW-0408">Iron</keyword>
<keyword id="KW-0479">Metal-binding</keyword>
<keyword id="KW-0560">Oxidoreductase</keyword>
<keyword id="KW-0575">Peroxidase</keyword>
<feature type="chain" id="PRO_0000455325" description="Dye-decolorizing peroxidase">
    <location>
        <begin position="1"/>
        <end position="367"/>
    </location>
</feature>
<feature type="region of interest" description="Disordered" evidence="4">
    <location>
        <begin position="311"/>
        <end position="367"/>
    </location>
</feature>
<feature type="region of interest" description="Targeting peptide" evidence="10">
    <location>
        <begin position="358"/>
        <end position="365"/>
    </location>
</feature>
<feature type="compositionally biased region" description="Low complexity" evidence="4">
    <location>
        <begin position="345"/>
        <end position="356"/>
    </location>
</feature>
<feature type="active site" description="Proton acceptor" evidence="3">
    <location>
        <position position="152"/>
    </location>
</feature>
<feature type="binding site" description="proximal binding residue" evidence="3">
    <location>
        <position position="225"/>
    </location>
    <ligand>
        <name>heme</name>
        <dbReference type="ChEBI" id="CHEBI:30413"/>
    </ligand>
    <ligandPart>
        <name>Fe</name>
        <dbReference type="ChEBI" id="CHEBI:18248"/>
    </ligandPart>
</feature>